<sequence length="487" mass="55209">MQKNNENILRRGRLGSSTKKEVMNYMTSLSFDKEIFESDIFCDIAHTKMLMEQNIILEEDGIKIINELKKIYNNGMDCLNLDPSLDDIHMVIESELIKNLGEDVAGRMHTGRSRNDEVATDLRMALRDKILTILKLLINMQKNILNLAKEHKETLTIGYTHLQHAQPITFGHHLLSYASPMERDILRLIDTYKRVNICPLGSGAFATTGFNINRNATKELLGFDSVIENSMDGVASRDFILETMANLSILGTNLSKICEEMVLFSSCEFGTIDLANEYTSTSSIMPQKKNPDVAEIARAKLSTLNGNLVTVLTILKALPNTYNRDLQEISPHLWDSVYTTIDTLKIIDGMISTIKVNADRMKELTEKNYSTATELADTLVRECNIPFRTAHGIVGEVVRLSIENNKNMNEVIRDVLDKFNLKLDDSKIEKALNPMENVKMRKVIGGPAPEEVERAINSYYSRIENYEKEVNDKIEKIEIIKNNLLNL</sequence>
<proteinExistence type="inferred from homology"/>
<reference key="1">
    <citation type="submission" date="2007-06" db="EMBL/GenBank/DDBJ databases">
        <title>Complete sequence of Methanococcus aeolicus Nankai-3.</title>
        <authorList>
            <consortium name="US DOE Joint Genome Institute"/>
            <person name="Copeland A."/>
            <person name="Lucas S."/>
            <person name="Lapidus A."/>
            <person name="Barry K."/>
            <person name="Glavina del Rio T."/>
            <person name="Dalin E."/>
            <person name="Tice H."/>
            <person name="Pitluck S."/>
            <person name="Chain P."/>
            <person name="Malfatti S."/>
            <person name="Shin M."/>
            <person name="Vergez L."/>
            <person name="Schmutz J."/>
            <person name="Larimer F."/>
            <person name="Land M."/>
            <person name="Hauser L."/>
            <person name="Kyrpides N."/>
            <person name="Lykidis A."/>
            <person name="Sieprawska-Lupa M."/>
            <person name="Whitman W.B."/>
            <person name="Richardson P."/>
        </authorList>
    </citation>
    <scope>NUCLEOTIDE SEQUENCE [LARGE SCALE GENOMIC DNA]</scope>
    <source>
        <strain>ATCC BAA-1280 / DSM 17508 / OCM 812 / Nankai-3</strain>
    </source>
</reference>
<comment type="catalytic activity">
    <reaction evidence="1">
        <text>2-(N(omega)-L-arginino)succinate = fumarate + L-arginine</text>
        <dbReference type="Rhea" id="RHEA:24020"/>
        <dbReference type="ChEBI" id="CHEBI:29806"/>
        <dbReference type="ChEBI" id="CHEBI:32682"/>
        <dbReference type="ChEBI" id="CHEBI:57472"/>
        <dbReference type="EC" id="4.3.2.1"/>
    </reaction>
</comment>
<comment type="pathway">
    <text evidence="1">Amino-acid biosynthesis; L-arginine biosynthesis; L-arginine from L-ornithine and carbamoyl phosphate: step 3/3.</text>
</comment>
<comment type="subcellular location">
    <subcellularLocation>
        <location evidence="1">Cytoplasm</location>
    </subcellularLocation>
</comment>
<comment type="similarity">
    <text evidence="1">Belongs to the lyase 1 family. Argininosuccinate lyase subfamily.</text>
</comment>
<dbReference type="EC" id="4.3.2.1" evidence="1"/>
<dbReference type="EMBL" id="CP000743">
    <property type="protein sequence ID" value="ABR56745.1"/>
    <property type="molecule type" value="Genomic_DNA"/>
</dbReference>
<dbReference type="RefSeq" id="WP_011973877.1">
    <property type="nucleotide sequence ID" value="NC_009635.1"/>
</dbReference>
<dbReference type="SMR" id="A6UW73"/>
<dbReference type="STRING" id="419665.Maeo_1168"/>
<dbReference type="GeneID" id="5327710"/>
<dbReference type="KEGG" id="mae:Maeo_1168"/>
<dbReference type="eggNOG" id="arCOG01748">
    <property type="taxonomic scope" value="Archaea"/>
</dbReference>
<dbReference type="HOGENOM" id="CLU_027272_2_3_2"/>
<dbReference type="OrthoDB" id="27337at2157"/>
<dbReference type="UniPathway" id="UPA00068">
    <property type="reaction ID" value="UER00114"/>
</dbReference>
<dbReference type="Proteomes" id="UP000001106">
    <property type="component" value="Chromosome"/>
</dbReference>
<dbReference type="GO" id="GO:0005829">
    <property type="term" value="C:cytosol"/>
    <property type="evidence" value="ECO:0007669"/>
    <property type="project" value="TreeGrafter"/>
</dbReference>
<dbReference type="GO" id="GO:0004056">
    <property type="term" value="F:argininosuccinate lyase activity"/>
    <property type="evidence" value="ECO:0007669"/>
    <property type="project" value="UniProtKB-UniRule"/>
</dbReference>
<dbReference type="GO" id="GO:0042450">
    <property type="term" value="P:arginine biosynthetic process via ornithine"/>
    <property type="evidence" value="ECO:0007669"/>
    <property type="project" value="InterPro"/>
</dbReference>
<dbReference type="GO" id="GO:0006526">
    <property type="term" value="P:L-arginine biosynthetic process"/>
    <property type="evidence" value="ECO:0007669"/>
    <property type="project" value="UniProtKB-UniRule"/>
</dbReference>
<dbReference type="CDD" id="cd01359">
    <property type="entry name" value="Argininosuccinate_lyase"/>
    <property type="match status" value="1"/>
</dbReference>
<dbReference type="FunFam" id="1.10.40.30:FF:000001">
    <property type="entry name" value="Argininosuccinate lyase"/>
    <property type="match status" value="1"/>
</dbReference>
<dbReference type="FunFam" id="1.20.200.10:FF:000015">
    <property type="entry name" value="argininosuccinate lyase isoform X2"/>
    <property type="match status" value="1"/>
</dbReference>
<dbReference type="Gene3D" id="1.10.40.30">
    <property type="entry name" value="Fumarase/aspartase (C-terminal domain)"/>
    <property type="match status" value="1"/>
</dbReference>
<dbReference type="Gene3D" id="1.20.200.10">
    <property type="entry name" value="Fumarase/aspartase (Central domain)"/>
    <property type="match status" value="1"/>
</dbReference>
<dbReference type="Gene3D" id="1.10.275.10">
    <property type="entry name" value="Fumarase/aspartase (N-terminal domain)"/>
    <property type="match status" value="1"/>
</dbReference>
<dbReference type="HAMAP" id="MF_00006">
    <property type="entry name" value="Arg_succ_lyase"/>
    <property type="match status" value="1"/>
</dbReference>
<dbReference type="InterPro" id="IPR029419">
    <property type="entry name" value="Arg_succ_lyase_C"/>
</dbReference>
<dbReference type="InterPro" id="IPR009049">
    <property type="entry name" value="Argininosuccinate_lyase"/>
</dbReference>
<dbReference type="InterPro" id="IPR024083">
    <property type="entry name" value="Fumarase/histidase_N"/>
</dbReference>
<dbReference type="InterPro" id="IPR000362">
    <property type="entry name" value="Fumarate_lyase_fam"/>
</dbReference>
<dbReference type="InterPro" id="IPR022761">
    <property type="entry name" value="Fumarate_lyase_N"/>
</dbReference>
<dbReference type="InterPro" id="IPR008948">
    <property type="entry name" value="L-Aspartase-like"/>
</dbReference>
<dbReference type="NCBIfam" id="TIGR00838">
    <property type="entry name" value="argH"/>
    <property type="match status" value="1"/>
</dbReference>
<dbReference type="PANTHER" id="PTHR43814">
    <property type="entry name" value="ARGININOSUCCINATE LYASE"/>
    <property type="match status" value="1"/>
</dbReference>
<dbReference type="PANTHER" id="PTHR43814:SF1">
    <property type="entry name" value="ARGININOSUCCINATE LYASE"/>
    <property type="match status" value="1"/>
</dbReference>
<dbReference type="Pfam" id="PF14698">
    <property type="entry name" value="ASL_C2"/>
    <property type="match status" value="1"/>
</dbReference>
<dbReference type="Pfam" id="PF00206">
    <property type="entry name" value="Lyase_1"/>
    <property type="match status" value="1"/>
</dbReference>
<dbReference type="PRINTS" id="PR00145">
    <property type="entry name" value="ARGSUCLYASE"/>
</dbReference>
<dbReference type="PRINTS" id="PR00149">
    <property type="entry name" value="FUMRATELYASE"/>
</dbReference>
<dbReference type="SUPFAM" id="SSF48557">
    <property type="entry name" value="L-aspartase-like"/>
    <property type="match status" value="1"/>
</dbReference>
<feature type="chain" id="PRO_0000321460" description="Argininosuccinate lyase">
    <location>
        <begin position="1"/>
        <end position="487"/>
    </location>
</feature>
<organism>
    <name type="scientific">Methanococcus aeolicus (strain ATCC BAA-1280 / DSM 17508 / OCM 812 / Nankai-3)</name>
    <dbReference type="NCBI Taxonomy" id="419665"/>
    <lineage>
        <taxon>Archaea</taxon>
        <taxon>Methanobacteriati</taxon>
        <taxon>Methanobacteriota</taxon>
        <taxon>Methanomada group</taxon>
        <taxon>Methanococci</taxon>
        <taxon>Methanococcales</taxon>
        <taxon>Methanococcaceae</taxon>
        <taxon>Methanococcus</taxon>
    </lineage>
</organism>
<accession>A6UW73</accession>
<evidence type="ECO:0000255" key="1">
    <source>
        <dbReference type="HAMAP-Rule" id="MF_00006"/>
    </source>
</evidence>
<keyword id="KW-0028">Amino-acid biosynthesis</keyword>
<keyword id="KW-0055">Arginine biosynthesis</keyword>
<keyword id="KW-0963">Cytoplasm</keyword>
<keyword id="KW-0456">Lyase</keyword>
<name>ARLY_META3</name>
<gene>
    <name evidence="1" type="primary">argH</name>
    <name type="ordered locus">Maeo_1168</name>
</gene>
<protein>
    <recommendedName>
        <fullName evidence="1">Argininosuccinate lyase</fullName>
        <shortName evidence="1">ASAL</shortName>
        <ecNumber evidence="1">4.3.2.1</ecNumber>
    </recommendedName>
    <alternativeName>
        <fullName evidence="1">Arginosuccinase</fullName>
    </alternativeName>
</protein>